<reference key="1">
    <citation type="journal article" date="2001" name="Lancet">
        <title>Whole genome sequencing of meticillin-resistant Staphylococcus aureus.</title>
        <authorList>
            <person name="Kuroda M."/>
            <person name="Ohta T."/>
            <person name="Uchiyama I."/>
            <person name="Baba T."/>
            <person name="Yuzawa H."/>
            <person name="Kobayashi I."/>
            <person name="Cui L."/>
            <person name="Oguchi A."/>
            <person name="Aoki K."/>
            <person name="Nagai Y."/>
            <person name="Lian J.-Q."/>
            <person name="Ito T."/>
            <person name="Kanamori M."/>
            <person name="Matsumaru H."/>
            <person name="Maruyama A."/>
            <person name="Murakami H."/>
            <person name="Hosoyama A."/>
            <person name="Mizutani-Ui Y."/>
            <person name="Takahashi N.K."/>
            <person name="Sawano T."/>
            <person name="Inoue R."/>
            <person name="Kaito C."/>
            <person name="Sekimizu K."/>
            <person name="Hirakawa H."/>
            <person name="Kuhara S."/>
            <person name="Goto S."/>
            <person name="Yabuzaki J."/>
            <person name="Kanehisa M."/>
            <person name="Yamashita A."/>
            <person name="Oshima K."/>
            <person name="Furuya K."/>
            <person name="Yoshino C."/>
            <person name="Shiba T."/>
            <person name="Hattori M."/>
            <person name="Ogasawara N."/>
            <person name="Hayashi H."/>
            <person name="Hiramatsu K."/>
        </authorList>
    </citation>
    <scope>NUCLEOTIDE SEQUENCE [LARGE SCALE GENOMIC DNA]</scope>
    <source>
        <strain>Mu50 / ATCC 700699</strain>
    </source>
</reference>
<name>SECG_STAAM</name>
<feature type="chain" id="PRO_0000157241" description="Probable protein-export membrane protein SecG">
    <location>
        <begin position="1"/>
        <end position="77"/>
    </location>
</feature>
<feature type="transmembrane region" description="Helical" evidence="2">
    <location>
        <begin position="2"/>
        <end position="22"/>
    </location>
</feature>
<feature type="transmembrane region" description="Helical" evidence="2">
    <location>
        <begin position="57"/>
        <end position="77"/>
    </location>
</feature>
<dbReference type="EMBL" id="BA000017">
    <property type="protein sequence ID" value="BAB56940.1"/>
    <property type="molecule type" value="Genomic_DNA"/>
</dbReference>
<dbReference type="RefSeq" id="WP_000556760.1">
    <property type="nucleotide sequence ID" value="NC_002758.2"/>
</dbReference>
<dbReference type="GeneID" id="98345127"/>
<dbReference type="KEGG" id="sav:SAV0778"/>
<dbReference type="HOGENOM" id="CLU_094156_6_1_9"/>
<dbReference type="PhylomeDB" id="Q99VK3"/>
<dbReference type="Proteomes" id="UP000002481">
    <property type="component" value="Chromosome"/>
</dbReference>
<dbReference type="GO" id="GO:0005886">
    <property type="term" value="C:plasma membrane"/>
    <property type="evidence" value="ECO:0007669"/>
    <property type="project" value="UniProtKB-SubCell"/>
</dbReference>
<dbReference type="GO" id="GO:0015450">
    <property type="term" value="F:protein-transporting ATPase activity"/>
    <property type="evidence" value="ECO:0007669"/>
    <property type="project" value="InterPro"/>
</dbReference>
<dbReference type="GO" id="GO:0065002">
    <property type="term" value="P:intracellular protein transmembrane transport"/>
    <property type="evidence" value="ECO:0007669"/>
    <property type="project" value="TreeGrafter"/>
</dbReference>
<dbReference type="GO" id="GO:0009306">
    <property type="term" value="P:protein secretion"/>
    <property type="evidence" value="ECO:0007669"/>
    <property type="project" value="InterPro"/>
</dbReference>
<dbReference type="GO" id="GO:0043952">
    <property type="term" value="P:protein transport by the Sec complex"/>
    <property type="evidence" value="ECO:0007669"/>
    <property type="project" value="TreeGrafter"/>
</dbReference>
<dbReference type="InterPro" id="IPR004692">
    <property type="entry name" value="SecG"/>
</dbReference>
<dbReference type="NCBIfam" id="TIGR00810">
    <property type="entry name" value="secG"/>
    <property type="match status" value="1"/>
</dbReference>
<dbReference type="PANTHER" id="PTHR34182">
    <property type="entry name" value="PROTEIN-EXPORT MEMBRANE PROTEIN SECG"/>
    <property type="match status" value="1"/>
</dbReference>
<dbReference type="PANTHER" id="PTHR34182:SF1">
    <property type="entry name" value="PROTEIN-EXPORT MEMBRANE PROTEIN SECG"/>
    <property type="match status" value="1"/>
</dbReference>
<dbReference type="Pfam" id="PF03840">
    <property type="entry name" value="SecG"/>
    <property type="match status" value="1"/>
</dbReference>
<dbReference type="PRINTS" id="PR01651">
    <property type="entry name" value="SECGEXPORT"/>
</dbReference>
<evidence type="ECO:0000250" key="1"/>
<evidence type="ECO:0000255" key="2"/>
<evidence type="ECO:0000305" key="3"/>
<comment type="function">
    <text evidence="1">Involved in protein export. Participates in an early event of protein translocation (By similarity).</text>
</comment>
<comment type="subcellular location">
    <subcellularLocation>
        <location evidence="1">Cell membrane</location>
        <topology evidence="1">Multi-pass membrane protein</topology>
    </subcellularLocation>
</comment>
<comment type="similarity">
    <text evidence="3">Belongs to the SecG family.</text>
</comment>
<sequence length="77" mass="8399">MHTFLIVLLIIDCIALITVVLLQEGKSSGLSGAISGGAEQLFGKQKQRGVDLFLNRLTIILSILFFVLMICISYLGM</sequence>
<organism>
    <name type="scientific">Staphylococcus aureus (strain Mu50 / ATCC 700699)</name>
    <dbReference type="NCBI Taxonomy" id="158878"/>
    <lineage>
        <taxon>Bacteria</taxon>
        <taxon>Bacillati</taxon>
        <taxon>Bacillota</taxon>
        <taxon>Bacilli</taxon>
        <taxon>Bacillales</taxon>
        <taxon>Staphylococcaceae</taxon>
        <taxon>Staphylococcus</taxon>
    </lineage>
</organism>
<protein>
    <recommendedName>
        <fullName>Probable protein-export membrane protein SecG</fullName>
    </recommendedName>
</protein>
<gene>
    <name type="primary">secG</name>
    <name type="ordered locus">SAV0778</name>
</gene>
<keyword id="KW-1003">Cell membrane</keyword>
<keyword id="KW-0472">Membrane</keyword>
<keyword id="KW-0653">Protein transport</keyword>
<keyword id="KW-0811">Translocation</keyword>
<keyword id="KW-0812">Transmembrane</keyword>
<keyword id="KW-1133">Transmembrane helix</keyword>
<keyword id="KW-0813">Transport</keyword>
<proteinExistence type="inferred from homology"/>
<accession>Q99VK3</accession>